<protein>
    <recommendedName>
        <fullName evidence="1">Phosphoglucosamine mutase</fullName>
        <ecNumber evidence="1">5.4.2.10</ecNumber>
    </recommendedName>
</protein>
<accession>Q3KKM5</accession>
<name>GLMM_CHLTA</name>
<dbReference type="EC" id="5.4.2.10" evidence="1"/>
<dbReference type="EMBL" id="CP000051">
    <property type="protein sequence ID" value="AAX51097.1"/>
    <property type="molecule type" value="Genomic_DNA"/>
</dbReference>
<dbReference type="RefSeq" id="WP_009872200.1">
    <property type="nucleotide sequence ID" value="NC_007429.1"/>
</dbReference>
<dbReference type="SMR" id="Q3KKM5"/>
<dbReference type="KEGG" id="cta:CTA_0888"/>
<dbReference type="HOGENOM" id="CLU_016950_7_0_0"/>
<dbReference type="Proteomes" id="UP000002532">
    <property type="component" value="Chromosome"/>
</dbReference>
<dbReference type="GO" id="GO:0005829">
    <property type="term" value="C:cytosol"/>
    <property type="evidence" value="ECO:0007669"/>
    <property type="project" value="TreeGrafter"/>
</dbReference>
<dbReference type="GO" id="GO:0000287">
    <property type="term" value="F:magnesium ion binding"/>
    <property type="evidence" value="ECO:0007669"/>
    <property type="project" value="UniProtKB-UniRule"/>
</dbReference>
<dbReference type="GO" id="GO:0008966">
    <property type="term" value="F:phosphoglucosamine mutase activity"/>
    <property type="evidence" value="ECO:0007669"/>
    <property type="project" value="UniProtKB-UniRule"/>
</dbReference>
<dbReference type="GO" id="GO:0004615">
    <property type="term" value="F:phosphomannomutase activity"/>
    <property type="evidence" value="ECO:0007669"/>
    <property type="project" value="TreeGrafter"/>
</dbReference>
<dbReference type="GO" id="GO:0005975">
    <property type="term" value="P:carbohydrate metabolic process"/>
    <property type="evidence" value="ECO:0007669"/>
    <property type="project" value="InterPro"/>
</dbReference>
<dbReference type="GO" id="GO:0009252">
    <property type="term" value="P:peptidoglycan biosynthetic process"/>
    <property type="evidence" value="ECO:0007669"/>
    <property type="project" value="TreeGrafter"/>
</dbReference>
<dbReference type="GO" id="GO:0006048">
    <property type="term" value="P:UDP-N-acetylglucosamine biosynthetic process"/>
    <property type="evidence" value="ECO:0007669"/>
    <property type="project" value="TreeGrafter"/>
</dbReference>
<dbReference type="CDD" id="cd05802">
    <property type="entry name" value="GlmM"/>
    <property type="match status" value="1"/>
</dbReference>
<dbReference type="FunFam" id="3.30.310.50:FF:000001">
    <property type="entry name" value="Phosphoglucosamine mutase"/>
    <property type="match status" value="1"/>
</dbReference>
<dbReference type="FunFam" id="3.40.120.10:FF:000001">
    <property type="entry name" value="Phosphoglucosamine mutase"/>
    <property type="match status" value="1"/>
</dbReference>
<dbReference type="FunFam" id="3.40.120.10:FF:000003">
    <property type="entry name" value="Phosphoglucosamine mutase"/>
    <property type="match status" value="1"/>
</dbReference>
<dbReference type="Gene3D" id="3.40.120.10">
    <property type="entry name" value="Alpha-D-Glucose-1,6-Bisphosphate, subunit A, domain 3"/>
    <property type="match status" value="3"/>
</dbReference>
<dbReference type="Gene3D" id="3.30.310.50">
    <property type="entry name" value="Alpha-D-phosphohexomutase, C-terminal domain"/>
    <property type="match status" value="1"/>
</dbReference>
<dbReference type="HAMAP" id="MF_01554_B">
    <property type="entry name" value="GlmM_B"/>
    <property type="match status" value="1"/>
</dbReference>
<dbReference type="InterPro" id="IPR005844">
    <property type="entry name" value="A-D-PHexomutase_a/b/a-I"/>
</dbReference>
<dbReference type="InterPro" id="IPR016055">
    <property type="entry name" value="A-D-PHexomutase_a/b/a-I/II/III"/>
</dbReference>
<dbReference type="InterPro" id="IPR005845">
    <property type="entry name" value="A-D-PHexomutase_a/b/a-II"/>
</dbReference>
<dbReference type="InterPro" id="IPR005846">
    <property type="entry name" value="A-D-PHexomutase_a/b/a-III"/>
</dbReference>
<dbReference type="InterPro" id="IPR005843">
    <property type="entry name" value="A-D-PHexomutase_C"/>
</dbReference>
<dbReference type="InterPro" id="IPR036900">
    <property type="entry name" value="A-D-PHexomutase_C_sf"/>
</dbReference>
<dbReference type="InterPro" id="IPR016066">
    <property type="entry name" value="A-D-PHexomutase_CS"/>
</dbReference>
<dbReference type="InterPro" id="IPR005841">
    <property type="entry name" value="Alpha-D-phosphohexomutase_SF"/>
</dbReference>
<dbReference type="InterPro" id="IPR006352">
    <property type="entry name" value="GlmM_bact"/>
</dbReference>
<dbReference type="InterPro" id="IPR050060">
    <property type="entry name" value="Phosphoglucosamine_mutase"/>
</dbReference>
<dbReference type="NCBIfam" id="TIGR01455">
    <property type="entry name" value="glmM"/>
    <property type="match status" value="1"/>
</dbReference>
<dbReference type="NCBIfam" id="NF008139">
    <property type="entry name" value="PRK10887.1"/>
    <property type="match status" value="1"/>
</dbReference>
<dbReference type="PANTHER" id="PTHR42946:SF1">
    <property type="entry name" value="PHOSPHOGLUCOMUTASE (ALPHA-D-GLUCOSE-1,6-BISPHOSPHATE-DEPENDENT)"/>
    <property type="match status" value="1"/>
</dbReference>
<dbReference type="PANTHER" id="PTHR42946">
    <property type="entry name" value="PHOSPHOHEXOSE MUTASE"/>
    <property type="match status" value="1"/>
</dbReference>
<dbReference type="Pfam" id="PF02878">
    <property type="entry name" value="PGM_PMM_I"/>
    <property type="match status" value="1"/>
</dbReference>
<dbReference type="Pfam" id="PF02879">
    <property type="entry name" value="PGM_PMM_II"/>
    <property type="match status" value="1"/>
</dbReference>
<dbReference type="Pfam" id="PF02880">
    <property type="entry name" value="PGM_PMM_III"/>
    <property type="match status" value="1"/>
</dbReference>
<dbReference type="Pfam" id="PF00408">
    <property type="entry name" value="PGM_PMM_IV"/>
    <property type="match status" value="1"/>
</dbReference>
<dbReference type="PRINTS" id="PR00509">
    <property type="entry name" value="PGMPMM"/>
</dbReference>
<dbReference type="SUPFAM" id="SSF55957">
    <property type="entry name" value="Phosphoglucomutase, C-terminal domain"/>
    <property type="match status" value="1"/>
</dbReference>
<dbReference type="SUPFAM" id="SSF53738">
    <property type="entry name" value="Phosphoglucomutase, first 3 domains"/>
    <property type="match status" value="3"/>
</dbReference>
<dbReference type="PROSITE" id="PS00710">
    <property type="entry name" value="PGM_PMM"/>
    <property type="match status" value="1"/>
</dbReference>
<feature type="chain" id="PRO_0000301298" description="Phosphoglucosamine mutase">
    <location>
        <begin position="1"/>
        <end position="458"/>
    </location>
</feature>
<feature type="active site" description="Phosphoserine intermediate" evidence="1">
    <location>
        <position position="106"/>
    </location>
</feature>
<feature type="binding site" description="via phosphate group" evidence="1">
    <location>
        <position position="106"/>
    </location>
    <ligand>
        <name>Mg(2+)</name>
        <dbReference type="ChEBI" id="CHEBI:18420"/>
    </ligand>
</feature>
<feature type="binding site" evidence="1">
    <location>
        <position position="247"/>
    </location>
    <ligand>
        <name>Mg(2+)</name>
        <dbReference type="ChEBI" id="CHEBI:18420"/>
    </ligand>
</feature>
<feature type="binding site" evidence="1">
    <location>
        <position position="249"/>
    </location>
    <ligand>
        <name>Mg(2+)</name>
        <dbReference type="ChEBI" id="CHEBI:18420"/>
    </ligand>
</feature>
<feature type="binding site" evidence="1">
    <location>
        <position position="251"/>
    </location>
    <ligand>
        <name>Mg(2+)</name>
        <dbReference type="ChEBI" id="CHEBI:18420"/>
    </ligand>
</feature>
<feature type="modified residue" description="Phosphoserine" evidence="1">
    <location>
        <position position="106"/>
    </location>
</feature>
<reference key="1">
    <citation type="journal article" date="2005" name="Infect. Immun.">
        <title>Comparative genomic analysis of Chlamydia trachomatis oculotropic and genitotropic strains.</title>
        <authorList>
            <person name="Carlson J.H."/>
            <person name="Porcella S.F."/>
            <person name="McClarty G."/>
            <person name="Caldwell H.D."/>
        </authorList>
    </citation>
    <scope>NUCLEOTIDE SEQUENCE [LARGE SCALE GENOMIC DNA]</scope>
    <source>
        <strain>ATCC VR-571B / DSM 19440 / HAR-13</strain>
    </source>
</reference>
<keyword id="KW-0413">Isomerase</keyword>
<keyword id="KW-0460">Magnesium</keyword>
<keyword id="KW-0479">Metal-binding</keyword>
<keyword id="KW-0597">Phosphoprotein</keyword>
<organism>
    <name type="scientific">Chlamydia trachomatis serovar A (strain ATCC VR-571B / DSM 19440 / HAR-13)</name>
    <dbReference type="NCBI Taxonomy" id="315277"/>
    <lineage>
        <taxon>Bacteria</taxon>
        <taxon>Pseudomonadati</taxon>
        <taxon>Chlamydiota</taxon>
        <taxon>Chlamydiia</taxon>
        <taxon>Chlamydiales</taxon>
        <taxon>Chlamydiaceae</taxon>
        <taxon>Chlamydia/Chlamydophila group</taxon>
        <taxon>Chlamydia</taxon>
    </lineage>
</organism>
<comment type="function">
    <text evidence="1">Catalyzes the conversion of glucosamine-6-phosphate to glucosamine-1-phosphate.</text>
</comment>
<comment type="catalytic activity">
    <reaction evidence="1">
        <text>alpha-D-glucosamine 1-phosphate = D-glucosamine 6-phosphate</text>
        <dbReference type="Rhea" id="RHEA:23424"/>
        <dbReference type="ChEBI" id="CHEBI:58516"/>
        <dbReference type="ChEBI" id="CHEBI:58725"/>
        <dbReference type="EC" id="5.4.2.10"/>
    </reaction>
</comment>
<comment type="cofactor">
    <cofactor evidence="1">
        <name>Mg(2+)</name>
        <dbReference type="ChEBI" id="CHEBI:18420"/>
    </cofactor>
    <text evidence="1">Binds 1 Mg(2+) ion per subunit.</text>
</comment>
<comment type="PTM">
    <text evidence="1">Activated by phosphorylation.</text>
</comment>
<comment type="similarity">
    <text evidence="1">Belongs to the phosphohexose mutase family.</text>
</comment>
<sequence>MTRDVRQLFGTDGVRGRANFEPMTVETSVLLGKAVAGVLLEKHAGKHRVVVGKDTRLSGYMFENALIAGLTSMGIETLMLGPIPTPGVAFITRAYRADAGIMISASHNPYRDNGIKIFSSDGFKIGQAVEERIEAMVASKDFGKLPDDHAVGKNKRVKDATGRYIEYAKATFPKGRTLKGLRIVLDCAHGATYRVAPSVFEELDAEVICYGCEPSGCNINAGCGALWPSTIQKAVIEHKADVGIALDGDGDRLIMVDEKGHIVDGDMLLSICASDLKRRQALSDNRVVATVMTNFGVLRYLESLGIQVTISPVGDRHVLQHMLENQAVLGGEQSGHMIFLDYNTTGDGIVSALQVLRIMIESESTLSDLTACIAKSPQALINVPVTKKVPLESLANVQGVLKEVKEVLGDSGRILLRYSGTENICRVMVEGTKKHQVDSLAKTIVDVVEAEIGAEISE</sequence>
<evidence type="ECO:0000255" key="1">
    <source>
        <dbReference type="HAMAP-Rule" id="MF_01554"/>
    </source>
</evidence>
<gene>
    <name evidence="1" type="primary">glmM</name>
    <name type="ordered locus">CTA_0888</name>
</gene>
<proteinExistence type="inferred from homology"/>